<sequence>MKCGRKRRRRRRHACKRKKRACKQRSSTIVRAHLVHRRRAARRCP</sequence>
<comment type="function">
    <text>Protamines substitute for histones in the chromatin of sperm during the haploid phase of spermatogenesis. They compact sperm DNA into a highly condensed, stable and inactive complex.</text>
</comment>
<comment type="subcellular location">
    <subcellularLocation>
        <location>Nucleus</location>
    </subcellularLocation>
    <subcellularLocation>
        <location>Chromosome</location>
    </subcellularLocation>
</comment>
<comment type="tissue specificity">
    <text>Testis.</text>
</comment>
<proteinExistence type="evidence at protein level"/>
<protein>
    <recommendedName>
        <fullName>Protamine Z2</fullName>
    </recommendedName>
    <alternativeName>
        <fullName>Scylliorhinine Z2</fullName>
    </alternativeName>
</protein>
<name>PRTZ2_SCYCA</name>
<reference key="1">
    <citation type="journal article" date="1986" name="Eur. J. Biochem.">
        <title>Nucleotide sequence of a cDNA clone encoding Scylliorhinus caniculus protamine Z2.</title>
        <authorList>
            <person name="Berlot-Picard F."/>
            <person name="Vodjdani G."/>
            <person name="Doly J."/>
        </authorList>
    </citation>
    <scope>NUCLEOTIDE SEQUENCE [MRNA]</scope>
    <source>
        <tissue>Testis</tissue>
    </source>
</reference>
<reference key="2">
    <citation type="journal article" date="1985" name="Biochim. Biophys. Acta">
        <title>Amino acid sequence of a cysteine-rich, arginine-rich sperm protamine of the dog-fish Scylliorhinus caniculus.</title>
        <authorList>
            <person name="Martinage A."/>
            <person name="Gusse M."/>
            <person name="Belaiche D."/>
            <person name="Sautiere P."/>
            <person name="Chevaillier P."/>
        </authorList>
    </citation>
    <scope>PROTEIN SEQUENCE</scope>
    <source>
        <tissue>Testis</tissue>
    </source>
</reference>
<reference key="3">
    <citation type="journal article" date="1983" name="Biochim. Biophys. Acta">
        <title>Extraction, purification and characterization of the sperm protamines of the dog-fish Scylliorhinus caniculus.</title>
        <authorList>
            <person name="Gusse M."/>
            <person name="Sautiere P."/>
            <person name="Chauviere M."/>
            <person name="Chevaillier P."/>
        </authorList>
    </citation>
    <scope>PROTEIN SEQUENCE OF 1-5</scope>
</reference>
<organism>
    <name type="scientific">Scyliorhinus canicula</name>
    <name type="common">Small-spotted catshark</name>
    <name type="synonym">Squalus canicula</name>
    <dbReference type="NCBI Taxonomy" id="7830"/>
    <lineage>
        <taxon>Eukaryota</taxon>
        <taxon>Metazoa</taxon>
        <taxon>Chordata</taxon>
        <taxon>Craniata</taxon>
        <taxon>Vertebrata</taxon>
        <taxon>Chondrichthyes</taxon>
        <taxon>Elasmobranchii</taxon>
        <taxon>Galeomorphii</taxon>
        <taxon>Galeoidea</taxon>
        <taxon>Carcharhiniformes</taxon>
        <taxon>Scyliorhinidae</taxon>
        <taxon>Scyliorhinus</taxon>
    </lineage>
</organism>
<accession>P06841</accession>
<evidence type="ECO:0000256" key="1">
    <source>
        <dbReference type="SAM" id="MobiDB-lite"/>
    </source>
</evidence>
<evidence type="ECO:0000305" key="2"/>
<dbReference type="EMBL" id="X04517">
    <property type="protein sequence ID" value="CAA28202.1"/>
    <property type="molecule type" value="mRNA"/>
</dbReference>
<dbReference type="PIR" id="A18865">
    <property type="entry name" value="A18865"/>
</dbReference>
<dbReference type="SMR" id="P06841"/>
<dbReference type="GO" id="GO:0000786">
    <property type="term" value="C:nucleosome"/>
    <property type="evidence" value="ECO:0007669"/>
    <property type="project" value="UniProtKB-KW"/>
</dbReference>
<dbReference type="GO" id="GO:0005634">
    <property type="term" value="C:nucleus"/>
    <property type="evidence" value="ECO:0007669"/>
    <property type="project" value="UniProtKB-SubCell"/>
</dbReference>
<dbReference type="GO" id="GO:0003677">
    <property type="term" value="F:DNA binding"/>
    <property type="evidence" value="ECO:0007669"/>
    <property type="project" value="UniProtKB-KW"/>
</dbReference>
<dbReference type="GO" id="GO:0030154">
    <property type="term" value="P:cell differentiation"/>
    <property type="evidence" value="ECO:0007669"/>
    <property type="project" value="UniProtKB-KW"/>
</dbReference>
<dbReference type="GO" id="GO:0030261">
    <property type="term" value="P:chromosome condensation"/>
    <property type="evidence" value="ECO:0007669"/>
    <property type="project" value="UniProtKB-KW"/>
</dbReference>
<dbReference type="GO" id="GO:0007283">
    <property type="term" value="P:spermatogenesis"/>
    <property type="evidence" value="ECO:0007669"/>
    <property type="project" value="UniProtKB-KW"/>
</dbReference>
<feature type="chain" id="PRO_0000106630" description="Protamine Z2">
    <location>
        <begin position="1"/>
        <end position="45"/>
    </location>
</feature>
<feature type="region of interest" description="Disordered" evidence="1">
    <location>
        <begin position="1"/>
        <end position="26"/>
    </location>
</feature>
<feature type="compositionally biased region" description="Basic residues" evidence="1">
    <location>
        <begin position="1"/>
        <end position="23"/>
    </location>
</feature>
<feature type="sequence conflict" description="In Ref. 2; AA sequence." evidence="2" ref="2">
    <original>P</original>
    <variation>PR</variation>
    <location>
        <position position="45"/>
    </location>
</feature>
<keyword id="KW-0158">Chromosome</keyword>
<keyword id="KW-0217">Developmental protein</keyword>
<keyword id="KW-0221">Differentiation</keyword>
<keyword id="KW-0903">Direct protein sequencing</keyword>
<keyword id="KW-0226">DNA condensation</keyword>
<keyword id="KW-0238">DNA-binding</keyword>
<keyword id="KW-0544">Nucleosome core</keyword>
<keyword id="KW-0539">Nucleus</keyword>
<keyword id="KW-0744">Spermatogenesis</keyword>